<reference key="1">
    <citation type="journal article" date="1993" name="Mol. Cell. Biol.">
        <title>Two homologous zinc finger genes identified by multicopy suppression in a SNF1 protein kinase mutant of Saccharomyces cerevisiae.</title>
        <authorList>
            <person name="Estruch F."/>
            <person name="Carlson M."/>
        </authorList>
    </citation>
    <scope>NUCLEOTIDE SEQUENCE [GENOMIC DNA]</scope>
    <source>
        <strain>ATCC 204508 / S288c</strain>
    </source>
</reference>
<reference key="2">
    <citation type="journal article" date="1994" name="Yeast">
        <title>Sequence of a 28.6 kb region of yeast chromosome XI includes the FBA1 and TOA2 genes, an open reading frame (ORF) similar to a translationally controlled tumour protein, one ORF containing motifs also found in plant storage proteins and 13 ORFs with weak or no homology to known proteins.</title>
        <authorList>
            <person name="Rasmussen S.W."/>
        </authorList>
    </citation>
    <scope>NUCLEOTIDE SEQUENCE [GENOMIC DNA]</scope>
    <source>
        <strain>ATCC 204508 / S288c</strain>
    </source>
</reference>
<reference key="3">
    <citation type="journal article" date="1994" name="Nature">
        <title>Complete DNA sequence of yeast chromosome XI.</title>
        <authorList>
            <person name="Dujon B."/>
            <person name="Alexandraki D."/>
            <person name="Andre B."/>
            <person name="Ansorge W."/>
            <person name="Baladron V."/>
            <person name="Ballesta J.P.G."/>
            <person name="Banrevi A."/>
            <person name="Bolle P.-A."/>
            <person name="Bolotin-Fukuhara M."/>
            <person name="Bossier P."/>
            <person name="Bou G."/>
            <person name="Boyer J."/>
            <person name="Buitrago M.J."/>
            <person name="Cheret G."/>
            <person name="Colleaux L."/>
            <person name="Daignan-Fornier B."/>
            <person name="del Rey F."/>
            <person name="Dion C."/>
            <person name="Domdey H."/>
            <person name="Duesterhoeft A."/>
            <person name="Duesterhus S."/>
            <person name="Entian K.-D."/>
            <person name="Erfle H."/>
            <person name="Esteban P.F."/>
            <person name="Feldmann H."/>
            <person name="Fernandes L."/>
            <person name="Fobo G.M."/>
            <person name="Fritz C."/>
            <person name="Fukuhara H."/>
            <person name="Gabel C."/>
            <person name="Gaillon L."/>
            <person name="Garcia-Cantalejo J.M."/>
            <person name="Garcia-Ramirez J.J."/>
            <person name="Gent M.E."/>
            <person name="Ghazvini M."/>
            <person name="Goffeau A."/>
            <person name="Gonzalez A."/>
            <person name="Grothues D."/>
            <person name="Guerreiro P."/>
            <person name="Hegemann J.H."/>
            <person name="Hewitt N."/>
            <person name="Hilger F."/>
            <person name="Hollenberg C.P."/>
            <person name="Horaitis O."/>
            <person name="Indge K.J."/>
            <person name="Jacquier A."/>
            <person name="James C.M."/>
            <person name="Jauniaux J.-C."/>
            <person name="Jimenez A."/>
            <person name="Keuchel H."/>
            <person name="Kirchrath L."/>
            <person name="Kleine K."/>
            <person name="Koetter P."/>
            <person name="Legrain P."/>
            <person name="Liebl S."/>
            <person name="Louis E.J."/>
            <person name="Maia e Silva A."/>
            <person name="Marck C."/>
            <person name="Monnier A.-L."/>
            <person name="Moestl D."/>
            <person name="Mueller S."/>
            <person name="Obermaier B."/>
            <person name="Oliver S.G."/>
            <person name="Pallier C."/>
            <person name="Pascolo S."/>
            <person name="Pfeiffer F."/>
            <person name="Philippsen P."/>
            <person name="Planta R.J."/>
            <person name="Pohl F.M."/>
            <person name="Pohl T.M."/>
            <person name="Poehlmann R."/>
            <person name="Portetelle D."/>
            <person name="Purnelle B."/>
            <person name="Puzos V."/>
            <person name="Ramezani Rad M."/>
            <person name="Rasmussen S.W."/>
            <person name="Remacha M.A."/>
            <person name="Revuelta J.L."/>
            <person name="Richard G.-F."/>
            <person name="Rieger M."/>
            <person name="Rodrigues-Pousada C."/>
            <person name="Rose M."/>
            <person name="Rupp T."/>
            <person name="Santos M.A."/>
            <person name="Schwager C."/>
            <person name="Sensen C."/>
            <person name="Skala J."/>
            <person name="Soares H."/>
            <person name="Sor F."/>
            <person name="Stegemann J."/>
            <person name="Tettelin H."/>
            <person name="Thierry A."/>
            <person name="Tzermia M."/>
            <person name="Urrestarazu L.A."/>
            <person name="van Dyck L."/>
            <person name="van Vliet-Reedijk J.C."/>
            <person name="Valens M."/>
            <person name="Vandenbol M."/>
            <person name="Vilela C."/>
            <person name="Vissers S."/>
            <person name="von Wettstein D."/>
            <person name="Voss H."/>
            <person name="Wiemann S."/>
            <person name="Xu G."/>
            <person name="Zimmermann J."/>
            <person name="Haasemann M."/>
            <person name="Becker I."/>
            <person name="Mewes H.-W."/>
        </authorList>
    </citation>
    <scope>NUCLEOTIDE SEQUENCE [LARGE SCALE GENOMIC DNA]</scope>
    <source>
        <strain>ATCC 204508 / S288c</strain>
    </source>
</reference>
<reference key="4">
    <citation type="journal article" date="2014" name="G3 (Bethesda)">
        <title>The reference genome sequence of Saccharomyces cerevisiae: Then and now.</title>
        <authorList>
            <person name="Engel S.R."/>
            <person name="Dietrich F.S."/>
            <person name="Fisk D.G."/>
            <person name="Binkley G."/>
            <person name="Balakrishnan R."/>
            <person name="Costanzo M.C."/>
            <person name="Dwight S.S."/>
            <person name="Hitz B.C."/>
            <person name="Karra K."/>
            <person name="Nash R.S."/>
            <person name="Weng S."/>
            <person name="Wong E.D."/>
            <person name="Lloyd P."/>
            <person name="Skrzypek M.S."/>
            <person name="Miyasato S.R."/>
            <person name="Simison M."/>
            <person name="Cherry J.M."/>
        </authorList>
    </citation>
    <scope>GENOME REANNOTATION</scope>
    <source>
        <strain>ATCC 204508 / S288c</strain>
    </source>
</reference>
<reference key="5">
    <citation type="journal article" date="1996" name="EMBO J.">
        <title>The Saccharomyces cerevisiae zinc finger proteins Msn2p and Msn4p are required for transcriptional induction through the stress response element (STRE).</title>
        <authorList>
            <person name="Martinez-Pastor M.T."/>
            <person name="Marchler G."/>
            <person name="Schueller C."/>
            <person name="Marchler-Bauer A."/>
            <person name="Ruis H."/>
            <person name="Estruch F."/>
        </authorList>
    </citation>
    <scope>CHARACTERIZATION</scope>
</reference>
<reference key="6">
    <citation type="journal article" date="2003" name="J. Cell Biol.">
        <title>Oscillatory nucleocytoplasmic shuttling of the general stress response transcriptional activators Msn2 and Msn4 in Saccharomyces cerevisiae.</title>
        <authorList>
            <person name="Jacquet M."/>
            <person name="Renault G."/>
            <person name="Lallet S."/>
            <person name="De Mey J."/>
            <person name="Goldbeter A."/>
        </authorList>
    </citation>
    <scope>NUCLEOCYTOPLASMIC SHUTTLING</scope>
</reference>
<reference key="7">
    <citation type="journal article" date="2005" name="Mol. Cell. Proteomics">
        <title>Quantitative phosphoproteomics applied to the yeast pheromone signaling pathway.</title>
        <authorList>
            <person name="Gruhler A."/>
            <person name="Olsen J.V."/>
            <person name="Mohammed S."/>
            <person name="Mortensen P."/>
            <person name="Faergeman N.J."/>
            <person name="Mann M."/>
            <person name="Jensen O.N."/>
        </authorList>
    </citation>
    <scope>PHOSPHORYLATION [LARGE SCALE ANALYSIS] AT SER-558</scope>
    <scope>IDENTIFICATION BY MASS SPECTROMETRY [LARGE SCALE ANALYSIS]</scope>
    <source>
        <strain>YAL6B</strain>
    </source>
</reference>
<reference key="8">
    <citation type="journal article" date="2007" name="J. Proteome Res.">
        <title>Large-scale phosphorylation analysis of alpha-factor-arrested Saccharomyces cerevisiae.</title>
        <authorList>
            <person name="Li X."/>
            <person name="Gerber S.A."/>
            <person name="Rudner A.D."/>
            <person name="Beausoleil S.A."/>
            <person name="Haas W."/>
            <person name="Villen J."/>
            <person name="Elias J.E."/>
            <person name="Gygi S.P."/>
        </authorList>
    </citation>
    <scope>PHOSPHORYLATION [LARGE SCALE ANALYSIS] AT SER-263; SER-319 AND SER-558</scope>
    <scope>IDENTIFICATION BY MASS SPECTROMETRY [LARGE SCALE ANALYSIS]</scope>
    <source>
        <strain>ADR376</strain>
    </source>
</reference>
<reference key="9">
    <citation type="journal article" date="2007" name="Proc. Natl. Acad. Sci. U.S.A.">
        <title>Analysis of phosphorylation sites on proteins from Saccharomyces cerevisiae by electron transfer dissociation (ETD) mass spectrometry.</title>
        <authorList>
            <person name="Chi A."/>
            <person name="Huttenhower C."/>
            <person name="Geer L.Y."/>
            <person name="Coon J.J."/>
            <person name="Syka J.E.P."/>
            <person name="Bai D.L."/>
            <person name="Shabanowitz J."/>
            <person name="Burke D.J."/>
            <person name="Troyanskaya O.G."/>
            <person name="Hunt D.F."/>
        </authorList>
    </citation>
    <scope>PHOSPHORYLATION [LARGE SCALE ANALYSIS] AT SER-558</scope>
    <scope>IDENTIFICATION BY MASS SPECTROMETRY [LARGE SCALE ANALYSIS]</scope>
</reference>
<reference key="10">
    <citation type="journal article" date="2008" name="Mol. Cell. Proteomics">
        <title>A multidimensional chromatography technology for in-depth phosphoproteome analysis.</title>
        <authorList>
            <person name="Albuquerque C.P."/>
            <person name="Smolka M.B."/>
            <person name="Payne S.H."/>
            <person name="Bafna V."/>
            <person name="Eng J."/>
            <person name="Zhou H."/>
        </authorList>
    </citation>
    <scope>PHOSPHORYLATION [LARGE SCALE ANALYSIS] AT THR-479</scope>
    <scope>IDENTIFICATION BY MASS SPECTROMETRY [LARGE SCALE ANALYSIS]</scope>
</reference>
<reference key="11">
    <citation type="journal article" date="2009" name="Science">
        <title>Global analysis of Cdk1 substrate phosphorylation sites provides insights into evolution.</title>
        <authorList>
            <person name="Holt L.J."/>
            <person name="Tuch B.B."/>
            <person name="Villen J."/>
            <person name="Johnson A.D."/>
            <person name="Gygi S.P."/>
            <person name="Morgan D.O."/>
        </authorList>
    </citation>
    <scope>PHOSPHORYLATION [LARGE SCALE ANALYSIS] AT SER-178; SER-263; SER-316 AND SER-558</scope>
    <scope>IDENTIFICATION BY MASS SPECTROMETRY [LARGE SCALE ANALYSIS]</scope>
</reference>
<reference key="12">
    <citation type="journal article" date="2012" name="Proc. Natl. Acad. Sci. U.S.A.">
        <title>N-terminal acetylome analyses and functional insights of the N-terminal acetyltransferase NatB.</title>
        <authorList>
            <person name="Van Damme P."/>
            <person name="Lasa M."/>
            <person name="Polevoda B."/>
            <person name="Gazquez C."/>
            <person name="Elosegui-Artola A."/>
            <person name="Kim D.S."/>
            <person name="De Juan-Pardo E."/>
            <person name="Demeyer K."/>
            <person name="Hole K."/>
            <person name="Larrea E."/>
            <person name="Timmerman E."/>
            <person name="Prieto J."/>
            <person name="Arnesen T."/>
            <person name="Sherman F."/>
            <person name="Gevaert K."/>
            <person name="Aldabe R."/>
        </authorList>
    </citation>
    <scope>ACETYLATION [LARGE SCALE ANALYSIS] AT MET-1</scope>
    <scope>IDENTIFICATION BY MASS SPECTROMETRY [LARGE SCALE ANALYSIS]</scope>
</reference>
<reference key="13">
    <citation type="journal article" date="2016" name="PLoS ONE">
        <title>The 9aaTAD transactivation domains: From Gal4 to p53.</title>
        <authorList>
            <person name="Piskacek M."/>
            <person name="Havelka M."/>
            <person name="Rezacova M."/>
            <person name="Knight A."/>
        </authorList>
    </citation>
    <scope>DOMAIN</scope>
</reference>
<feature type="chain" id="PRO_0000046811" description="Zinc finger protein MSN4">
    <location>
        <begin position="1"/>
        <end position="630"/>
    </location>
</feature>
<feature type="zinc finger region" description="C2H2-type 1" evidence="1">
    <location>
        <begin position="573"/>
        <end position="596"/>
    </location>
</feature>
<feature type="zinc finger region" description="C2H2-type 2" evidence="1">
    <location>
        <begin position="602"/>
        <end position="624"/>
    </location>
</feature>
<feature type="region of interest" description="Disordered" evidence="2">
    <location>
        <begin position="37"/>
        <end position="77"/>
    </location>
</feature>
<feature type="region of interest" description="Disordered" evidence="2">
    <location>
        <begin position="115"/>
        <end position="137"/>
    </location>
</feature>
<feature type="region of interest" description="Disordered" evidence="2">
    <location>
        <begin position="292"/>
        <end position="322"/>
    </location>
</feature>
<feature type="region of interest" description="Disordered" evidence="2">
    <location>
        <begin position="360"/>
        <end position="379"/>
    </location>
</feature>
<feature type="region of interest" description="Disordered" evidence="2">
    <location>
        <begin position="502"/>
        <end position="566"/>
    </location>
</feature>
<feature type="short sequence motif" description="9aaTAD" evidence="3">
    <location>
        <begin position="237"/>
        <end position="245"/>
    </location>
</feature>
<feature type="compositionally biased region" description="Low complexity" evidence="2">
    <location>
        <begin position="37"/>
        <end position="56"/>
    </location>
</feature>
<feature type="compositionally biased region" description="Polar residues" evidence="2">
    <location>
        <begin position="292"/>
        <end position="303"/>
    </location>
</feature>
<feature type="compositionally biased region" description="Low complexity" evidence="2">
    <location>
        <begin position="360"/>
        <end position="373"/>
    </location>
</feature>
<feature type="compositionally biased region" description="Low complexity" evidence="2">
    <location>
        <begin position="504"/>
        <end position="515"/>
    </location>
</feature>
<feature type="compositionally biased region" description="Polar residues" evidence="2">
    <location>
        <begin position="516"/>
        <end position="525"/>
    </location>
</feature>
<feature type="compositionally biased region" description="Polar residues" evidence="2">
    <location>
        <begin position="532"/>
        <end position="547"/>
    </location>
</feature>
<feature type="modified residue" description="N-acetylmethionine" evidence="10">
    <location>
        <position position="1"/>
    </location>
</feature>
<feature type="modified residue" description="Phosphoserine" evidence="9">
    <location>
        <position position="178"/>
    </location>
</feature>
<feature type="modified residue" description="Phosphoserine" evidence="7 9">
    <location>
        <position position="263"/>
    </location>
</feature>
<feature type="modified residue" description="Phosphoserine" evidence="9">
    <location>
        <position position="316"/>
    </location>
</feature>
<feature type="modified residue" description="Phosphoserine" evidence="7">
    <location>
        <position position="319"/>
    </location>
</feature>
<feature type="modified residue" description="Phosphothreonine" evidence="8">
    <location>
        <position position="479"/>
    </location>
</feature>
<feature type="modified residue" description="Phosphoserine" evidence="5 6 7 9">
    <location>
        <position position="558"/>
    </location>
</feature>
<accession>P33749</accession>
<accession>D6VXM5</accession>
<accession>P35726</accession>
<name>MSN4_YEAST</name>
<gene>
    <name type="primary">MSN4</name>
    <name type="ordered locus">YKL062W</name>
</gene>
<protein>
    <recommendedName>
        <fullName>Zinc finger protein MSN4</fullName>
    </recommendedName>
    <alternativeName>
        <fullName>Multicopy suppressor of SNF1 protein 4</fullName>
    </alternativeName>
</protein>
<dbReference type="EMBL" id="L08839">
    <property type="protein sequence ID" value="AAA34807.1"/>
    <property type="molecule type" value="Genomic_DNA"/>
</dbReference>
<dbReference type="EMBL" id="X75781">
    <property type="protein sequence ID" value="CAA53421.1"/>
    <property type="molecule type" value="Genomic_DNA"/>
</dbReference>
<dbReference type="EMBL" id="Z28062">
    <property type="protein sequence ID" value="CAA81899.1"/>
    <property type="molecule type" value="Genomic_DNA"/>
</dbReference>
<dbReference type="EMBL" id="BK006944">
    <property type="protein sequence ID" value="DAA09095.1"/>
    <property type="molecule type" value="Genomic_DNA"/>
</dbReference>
<dbReference type="PIR" id="S37884">
    <property type="entry name" value="S37884"/>
</dbReference>
<dbReference type="RefSeq" id="NP_012861.1">
    <property type="nucleotide sequence ID" value="NM_001179628.1"/>
</dbReference>
<dbReference type="SMR" id="P33749"/>
<dbReference type="BioGRID" id="34071">
    <property type="interactions" value="170"/>
</dbReference>
<dbReference type="DIP" id="DIP-6574N"/>
<dbReference type="FunCoup" id="P33749">
    <property type="interactions" value="2687"/>
</dbReference>
<dbReference type="IntAct" id="P33749">
    <property type="interactions" value="63"/>
</dbReference>
<dbReference type="MINT" id="P33749"/>
<dbReference type="STRING" id="4932.YKL062W"/>
<dbReference type="GlyGen" id="P33749">
    <property type="glycosylation" value="4 sites, 1 O-linked glycan (3 sites)"/>
</dbReference>
<dbReference type="iPTMnet" id="P33749"/>
<dbReference type="PaxDb" id="4932-YKL062W"/>
<dbReference type="PeptideAtlas" id="P33749"/>
<dbReference type="EnsemblFungi" id="YKL062W_mRNA">
    <property type="protein sequence ID" value="YKL062W"/>
    <property type="gene ID" value="YKL062W"/>
</dbReference>
<dbReference type="GeneID" id="853803"/>
<dbReference type="KEGG" id="sce:YKL062W"/>
<dbReference type="AGR" id="SGD:S000001545"/>
<dbReference type="SGD" id="S000001545">
    <property type="gene designation" value="MSN4"/>
</dbReference>
<dbReference type="VEuPathDB" id="FungiDB:YKL062W"/>
<dbReference type="eggNOG" id="KOG1721">
    <property type="taxonomic scope" value="Eukaryota"/>
</dbReference>
<dbReference type="GeneTree" id="ENSGT00940000174779"/>
<dbReference type="HOGENOM" id="CLU_024342_0_0_1"/>
<dbReference type="InParanoid" id="P33749"/>
<dbReference type="OMA" id="PHQHATS"/>
<dbReference type="OrthoDB" id="654211at2759"/>
<dbReference type="BioCyc" id="YEAST:G3O-31860-MONOMER"/>
<dbReference type="BioGRID-ORCS" id="853803">
    <property type="hits" value="1 hit in 13 CRISPR screens"/>
</dbReference>
<dbReference type="PRO" id="PR:P33749"/>
<dbReference type="Proteomes" id="UP000002311">
    <property type="component" value="Chromosome XI"/>
</dbReference>
<dbReference type="RNAct" id="P33749">
    <property type="molecule type" value="protein"/>
</dbReference>
<dbReference type="GO" id="GO:0005829">
    <property type="term" value="C:cytosol"/>
    <property type="evidence" value="ECO:0000314"/>
    <property type="project" value="SGD"/>
</dbReference>
<dbReference type="GO" id="GO:0005634">
    <property type="term" value="C:nucleus"/>
    <property type="evidence" value="ECO:0000314"/>
    <property type="project" value="SGD"/>
</dbReference>
<dbReference type="GO" id="GO:0000987">
    <property type="term" value="F:cis-regulatory region sequence-specific DNA binding"/>
    <property type="evidence" value="ECO:0000314"/>
    <property type="project" value="SGD"/>
</dbReference>
<dbReference type="GO" id="GO:0000981">
    <property type="term" value="F:DNA-binding transcription factor activity, RNA polymerase II-specific"/>
    <property type="evidence" value="ECO:0000314"/>
    <property type="project" value="SGD"/>
</dbReference>
<dbReference type="GO" id="GO:0008270">
    <property type="term" value="F:zinc ion binding"/>
    <property type="evidence" value="ECO:0007669"/>
    <property type="project" value="UniProtKB-KW"/>
</dbReference>
<dbReference type="GO" id="GO:0071476">
    <property type="term" value="P:cellular hypotonic response"/>
    <property type="evidence" value="ECO:0000316"/>
    <property type="project" value="SGD"/>
</dbReference>
<dbReference type="GO" id="GO:0071469">
    <property type="term" value="P:cellular response to alkaline pH"/>
    <property type="evidence" value="ECO:0000316"/>
    <property type="project" value="SGD"/>
</dbReference>
<dbReference type="GO" id="GO:0034198">
    <property type="term" value="P:cellular response to amino acid starvation"/>
    <property type="evidence" value="ECO:0000316"/>
    <property type="project" value="SGD"/>
</dbReference>
<dbReference type="GO" id="GO:0071243">
    <property type="term" value="P:cellular response to arsenic-containing substance"/>
    <property type="evidence" value="ECO:0000316"/>
    <property type="project" value="SGD"/>
</dbReference>
<dbReference type="GO" id="GO:0070417">
    <property type="term" value="P:cellular response to cold"/>
    <property type="evidence" value="ECO:0000316"/>
    <property type="project" value="SGD"/>
</dbReference>
<dbReference type="GO" id="GO:0071361">
    <property type="term" value="P:cellular response to ethanol"/>
    <property type="evidence" value="ECO:0000316"/>
    <property type="project" value="SGD"/>
</dbReference>
<dbReference type="GO" id="GO:0071497">
    <property type="term" value="P:cellular response to freezing"/>
    <property type="evidence" value="ECO:0000316"/>
    <property type="project" value="SGD"/>
</dbReference>
<dbReference type="GO" id="GO:0042149">
    <property type="term" value="P:cellular response to glucose starvation"/>
    <property type="evidence" value="ECO:0000316"/>
    <property type="project" value="SGD"/>
</dbReference>
<dbReference type="GO" id="GO:0034605">
    <property type="term" value="P:cellular response to heat"/>
    <property type="evidence" value="ECO:0000315"/>
    <property type="project" value="SGD"/>
</dbReference>
<dbReference type="GO" id="GO:0070301">
    <property type="term" value="P:cellular response to hydrogen peroxide"/>
    <property type="evidence" value="ECO:0000315"/>
    <property type="project" value="SGD"/>
</dbReference>
<dbReference type="GO" id="GO:0071464">
    <property type="term" value="P:cellular response to hydrostatic pressure"/>
    <property type="evidence" value="ECO:0000316"/>
    <property type="project" value="SGD"/>
</dbReference>
<dbReference type="GO" id="GO:0006995">
    <property type="term" value="P:cellular response to nitrogen starvation"/>
    <property type="evidence" value="ECO:0000316"/>
    <property type="project" value="SGD"/>
</dbReference>
<dbReference type="GO" id="GO:0071500">
    <property type="term" value="P:cellular response to nitrosative stress"/>
    <property type="evidence" value="ECO:0000316"/>
    <property type="project" value="SGD"/>
</dbReference>
<dbReference type="GO" id="GO:1902075">
    <property type="term" value="P:cellular response to salt"/>
    <property type="evidence" value="ECO:0000316"/>
    <property type="project" value="SGD"/>
</dbReference>
<dbReference type="GO" id="GO:0034224">
    <property type="term" value="P:cellular response to zinc ion starvation"/>
    <property type="evidence" value="ECO:0000316"/>
    <property type="project" value="SGD"/>
</dbReference>
<dbReference type="GO" id="GO:1990451">
    <property type="term" value="P:cellular stress response to acidic pH"/>
    <property type="evidence" value="ECO:0000315"/>
    <property type="project" value="SGD"/>
</dbReference>
<dbReference type="GO" id="GO:0006338">
    <property type="term" value="P:chromatin remodeling"/>
    <property type="evidence" value="ECO:0000316"/>
    <property type="project" value="SGD"/>
</dbReference>
<dbReference type="GO" id="GO:0045944">
    <property type="term" value="P:positive regulation of transcription by RNA polymerase II"/>
    <property type="evidence" value="ECO:0000315"/>
    <property type="project" value="SGD"/>
</dbReference>
<dbReference type="GO" id="GO:0042594">
    <property type="term" value="P:response to starvation"/>
    <property type="evidence" value="ECO:0000318"/>
    <property type="project" value="GO_Central"/>
</dbReference>
<dbReference type="FunFam" id="3.30.160.60:FF:000204">
    <property type="entry name" value="Zinc finger protein 331"/>
    <property type="match status" value="1"/>
</dbReference>
<dbReference type="FunFam" id="3.30.160.60:FF:000110">
    <property type="entry name" value="Zinc finger protein-like"/>
    <property type="match status" value="1"/>
</dbReference>
<dbReference type="Gene3D" id="3.30.160.60">
    <property type="entry name" value="Classic Zinc Finger"/>
    <property type="match status" value="2"/>
</dbReference>
<dbReference type="InterPro" id="IPR050331">
    <property type="entry name" value="Zinc_finger"/>
</dbReference>
<dbReference type="InterPro" id="IPR036236">
    <property type="entry name" value="Znf_C2H2_sf"/>
</dbReference>
<dbReference type="InterPro" id="IPR013087">
    <property type="entry name" value="Znf_C2H2_type"/>
</dbReference>
<dbReference type="PANTHER" id="PTHR16515:SF66">
    <property type="entry name" value="C2H2-TYPE DOMAIN-CONTAINING PROTEIN"/>
    <property type="match status" value="1"/>
</dbReference>
<dbReference type="PANTHER" id="PTHR16515">
    <property type="entry name" value="PR DOMAIN ZINC FINGER PROTEIN"/>
    <property type="match status" value="1"/>
</dbReference>
<dbReference type="Pfam" id="PF00096">
    <property type="entry name" value="zf-C2H2"/>
    <property type="match status" value="2"/>
</dbReference>
<dbReference type="SMART" id="SM00355">
    <property type="entry name" value="ZnF_C2H2"/>
    <property type="match status" value="2"/>
</dbReference>
<dbReference type="SUPFAM" id="SSF57667">
    <property type="entry name" value="beta-beta-alpha zinc fingers"/>
    <property type="match status" value="1"/>
</dbReference>
<dbReference type="PROSITE" id="PS00028">
    <property type="entry name" value="ZINC_FINGER_C2H2_1"/>
    <property type="match status" value="2"/>
</dbReference>
<dbReference type="PROSITE" id="PS50157">
    <property type="entry name" value="ZINC_FINGER_C2H2_2"/>
    <property type="match status" value="2"/>
</dbReference>
<proteinExistence type="evidence at protein level"/>
<keyword id="KW-0007">Acetylation</keyword>
<keyword id="KW-0010">Activator</keyword>
<keyword id="KW-0963">Cytoplasm</keyword>
<keyword id="KW-0238">DNA-binding</keyword>
<keyword id="KW-0479">Metal-binding</keyword>
<keyword id="KW-0539">Nucleus</keyword>
<keyword id="KW-0597">Phosphoprotein</keyword>
<keyword id="KW-1185">Reference proteome</keyword>
<keyword id="KW-0677">Repeat</keyword>
<keyword id="KW-0804">Transcription</keyword>
<keyword id="KW-0805">Transcription regulation</keyword>
<keyword id="KW-0862">Zinc</keyword>
<keyword id="KW-0863">Zinc-finger</keyword>
<organism>
    <name type="scientific">Saccharomyces cerevisiae (strain ATCC 204508 / S288c)</name>
    <name type="common">Baker's yeast</name>
    <dbReference type="NCBI Taxonomy" id="559292"/>
    <lineage>
        <taxon>Eukaryota</taxon>
        <taxon>Fungi</taxon>
        <taxon>Dikarya</taxon>
        <taxon>Ascomycota</taxon>
        <taxon>Saccharomycotina</taxon>
        <taxon>Saccharomycetes</taxon>
        <taxon>Saccharomycetales</taxon>
        <taxon>Saccharomycetaceae</taxon>
        <taxon>Saccharomyces</taxon>
    </lineage>
</organism>
<comment type="function">
    <text>Positive transcriptional factor that acts as a component of the stress responsive system. Recognizes and binds to the stress response element (STRE) which is involved in the response to various forms of stress (heat, oxidative, osmotic, etc.). Involved in the regulation of the CTT1, DDR2, HSP12 genes.</text>
</comment>
<comment type="subcellular location">
    <subcellularLocation>
        <location>Cytoplasm</location>
    </subcellularLocation>
    <subcellularLocation>
        <location>Nucleus</location>
    </subcellularLocation>
</comment>
<comment type="domain">
    <text evidence="4">The 9aaTAD motif (residues 237 to 245) is a transactivation domain present in a large number of yeast and animal transcription factors.</text>
</comment>
<sequence length="630" mass="69723">MLVFGPNSSFVRHANKKQEDSSIMNEPNGLMDPVLSTTNVSATSSNDNSANNSISSPEYTFGQFSMDSPHRTDATNTPILTATTNTTANNSLMNLKDTASLATNWKWKNSNNAQFVNDGEKQSSNANGKKNGGDKIYSSVATPQALNDELKNLEQLEKVFSPMNPINDSHFNENIELSPHQHATSPKTNLLEAEPSIYSNLFLDARLPNNANSTTGLNDNDYNLDDTNNDNTNSMQSILEDFVSSEEALKFMPDAGRDARRYSEVVTSSFPSMTDSRNSISHSIEFWNLNHKNSSNSKPTQQIIPEGTATTERRGSTISPTTTINNSNPNFKLLDHDVSQALSGYSMDFSKDSGITKPKSISSSLNRISHSSSTTRQQRASLPLIHDIESFANDSVMANPLSDSASFLSEENEDDAFGALNYNSLDATTMSAFDNNVDPFNILKSSPAQDQQFIKPSMMLSDNASAAAKLATSGVDNITPTPAFQRRSYDISMNSSFKILPTSQAHHAAQHHQQQPTKQATVSPNTRRRKSSSVTLSPTISHNNNNGKVPVQPRKRKSITTIDPNNYDKNKPFKCKDCEKAFRRSEHLKRHIRSVHSTERPFACMFCEKKFSRSDNLSQHLKTHKKHGDF</sequence>
<evidence type="ECO:0000255" key="1">
    <source>
        <dbReference type="PROSITE-ProRule" id="PRU00042"/>
    </source>
</evidence>
<evidence type="ECO:0000256" key="2">
    <source>
        <dbReference type="SAM" id="MobiDB-lite"/>
    </source>
</evidence>
<evidence type="ECO:0000269" key="3">
    <source>
    </source>
</evidence>
<evidence type="ECO:0000305" key="4">
    <source>
    </source>
</evidence>
<evidence type="ECO:0007744" key="5">
    <source>
    </source>
</evidence>
<evidence type="ECO:0007744" key="6">
    <source>
    </source>
</evidence>
<evidence type="ECO:0007744" key="7">
    <source>
    </source>
</evidence>
<evidence type="ECO:0007744" key="8">
    <source>
    </source>
</evidence>
<evidence type="ECO:0007744" key="9">
    <source>
    </source>
</evidence>
<evidence type="ECO:0007744" key="10">
    <source>
    </source>
</evidence>